<keyword id="KW-0067">ATP-binding</keyword>
<keyword id="KW-0143">Chaperone</keyword>
<keyword id="KW-0472">Membrane</keyword>
<keyword id="KW-0496">Mitochondrion</keyword>
<keyword id="KW-0999">Mitochondrion inner membrane</keyword>
<keyword id="KW-0547">Nucleotide-binding</keyword>
<keyword id="KW-1185">Reference proteome</keyword>
<keyword id="KW-0346">Stress response</keyword>
<keyword id="KW-0809">Transit peptide</keyword>
<keyword id="KW-0812">Transmembrane</keyword>
<keyword id="KW-1133">Transmembrane helix</keyword>
<dbReference type="EMBL" id="AF125155">
    <property type="protein sequence ID" value="AAD24466.1"/>
    <property type="molecule type" value="Genomic_DNA"/>
</dbReference>
<dbReference type="EMBL" id="Z35913">
    <property type="protein sequence ID" value="CAA84986.1"/>
    <property type="status" value="ALT_FRAME"/>
    <property type="molecule type" value="Genomic_DNA"/>
</dbReference>
<dbReference type="EMBL" id="BK006936">
    <property type="protein sequence ID" value="DAA07164.2"/>
    <property type="molecule type" value="Genomic_DNA"/>
</dbReference>
<dbReference type="PIR" id="S45902">
    <property type="entry name" value="S45902"/>
</dbReference>
<dbReference type="RefSeq" id="NP_009600.2">
    <property type="nucleotide sequence ID" value="NM_001178392.2"/>
</dbReference>
<dbReference type="SMR" id="P38228"/>
<dbReference type="BioGRID" id="32745">
    <property type="interactions" value="110"/>
</dbReference>
<dbReference type="DIP" id="DIP-2609N"/>
<dbReference type="FunCoup" id="P38228">
    <property type="interactions" value="154"/>
</dbReference>
<dbReference type="IntAct" id="P38228">
    <property type="interactions" value="4"/>
</dbReference>
<dbReference type="MINT" id="P38228"/>
<dbReference type="STRING" id="4932.YBR044C"/>
<dbReference type="PaxDb" id="4932-YBR044C"/>
<dbReference type="PeptideAtlas" id="P38228"/>
<dbReference type="EnsemblFungi" id="YBR044C_mRNA">
    <property type="protein sequence ID" value="YBR044C"/>
    <property type="gene ID" value="YBR044C"/>
</dbReference>
<dbReference type="GeneID" id="852332"/>
<dbReference type="KEGG" id="sce:YBR044C"/>
<dbReference type="AGR" id="SGD:S000000248"/>
<dbReference type="SGD" id="S000000248">
    <property type="gene designation" value="TCM62"/>
</dbReference>
<dbReference type="VEuPathDB" id="FungiDB:YBR044C"/>
<dbReference type="eggNOG" id="KOG0356">
    <property type="taxonomic scope" value="Eukaryota"/>
</dbReference>
<dbReference type="HOGENOM" id="CLU_485763_0_0_1"/>
<dbReference type="InParanoid" id="P38228"/>
<dbReference type="OMA" id="PSKMCAD"/>
<dbReference type="OrthoDB" id="4056908at2759"/>
<dbReference type="BioCyc" id="YEAST:G3O-29017-MONOMER"/>
<dbReference type="BioGRID-ORCS" id="852332">
    <property type="hits" value="1 hit in 10 CRISPR screens"/>
</dbReference>
<dbReference type="PRO" id="PR:P38228"/>
<dbReference type="Proteomes" id="UP000002311">
    <property type="component" value="Chromosome II"/>
</dbReference>
<dbReference type="RNAct" id="P38228">
    <property type="molecule type" value="protein"/>
</dbReference>
<dbReference type="GO" id="GO:0005743">
    <property type="term" value="C:mitochondrial inner membrane"/>
    <property type="evidence" value="ECO:0000314"/>
    <property type="project" value="SGD"/>
</dbReference>
<dbReference type="GO" id="GO:0005759">
    <property type="term" value="C:mitochondrial matrix"/>
    <property type="evidence" value="ECO:0000318"/>
    <property type="project" value="GO_Central"/>
</dbReference>
<dbReference type="GO" id="GO:0005739">
    <property type="term" value="C:mitochondrion"/>
    <property type="evidence" value="ECO:0007005"/>
    <property type="project" value="SGD"/>
</dbReference>
<dbReference type="GO" id="GO:0005524">
    <property type="term" value="F:ATP binding"/>
    <property type="evidence" value="ECO:0007669"/>
    <property type="project" value="UniProtKB-KW"/>
</dbReference>
<dbReference type="GO" id="GO:0140662">
    <property type="term" value="F:ATP-dependent protein folding chaperone"/>
    <property type="evidence" value="ECO:0007669"/>
    <property type="project" value="InterPro"/>
</dbReference>
<dbReference type="GO" id="GO:0051087">
    <property type="term" value="F:protein-folding chaperone binding"/>
    <property type="evidence" value="ECO:0000318"/>
    <property type="project" value="GO_Central"/>
</dbReference>
<dbReference type="GO" id="GO:0051082">
    <property type="term" value="F:unfolded protein binding"/>
    <property type="evidence" value="ECO:0000250"/>
    <property type="project" value="SGD"/>
</dbReference>
<dbReference type="GO" id="GO:0051131">
    <property type="term" value="P:chaperone-mediated protein complex assembly"/>
    <property type="evidence" value="ECO:0000250"/>
    <property type="project" value="SGD"/>
</dbReference>
<dbReference type="GO" id="GO:0034553">
    <property type="term" value="P:mitochondrial respiratory chain complex II assembly"/>
    <property type="evidence" value="ECO:0000315"/>
    <property type="project" value="SGD"/>
</dbReference>
<dbReference type="GO" id="GO:0034514">
    <property type="term" value="P:mitochondrial unfolded protein response"/>
    <property type="evidence" value="ECO:0000318"/>
    <property type="project" value="GO_Central"/>
</dbReference>
<dbReference type="GO" id="GO:0007005">
    <property type="term" value="P:mitochondrion organization"/>
    <property type="evidence" value="ECO:0000318"/>
    <property type="project" value="GO_Central"/>
</dbReference>
<dbReference type="GO" id="GO:0006457">
    <property type="term" value="P:protein folding"/>
    <property type="evidence" value="ECO:0000318"/>
    <property type="project" value="GO_Central"/>
</dbReference>
<dbReference type="GO" id="GO:0045041">
    <property type="term" value="P:protein import into mitochondrial intermembrane space"/>
    <property type="evidence" value="ECO:0000318"/>
    <property type="project" value="GO_Central"/>
</dbReference>
<dbReference type="GO" id="GO:0042026">
    <property type="term" value="P:protein refolding"/>
    <property type="evidence" value="ECO:0007669"/>
    <property type="project" value="InterPro"/>
</dbReference>
<dbReference type="Gene3D" id="3.50.7.10">
    <property type="entry name" value="GroEL"/>
    <property type="match status" value="1"/>
</dbReference>
<dbReference type="Gene3D" id="1.10.560.10">
    <property type="entry name" value="GroEL-like equatorial domain"/>
    <property type="match status" value="1"/>
</dbReference>
<dbReference type="Gene3D" id="3.30.260.10">
    <property type="entry name" value="TCP-1-like chaperonin intermediate domain"/>
    <property type="match status" value="1"/>
</dbReference>
<dbReference type="InterPro" id="IPR001844">
    <property type="entry name" value="Cpn60/GroEL"/>
</dbReference>
<dbReference type="InterPro" id="IPR027409">
    <property type="entry name" value="GroEL-like_apical_dom_sf"/>
</dbReference>
<dbReference type="InterPro" id="IPR027413">
    <property type="entry name" value="GROEL-like_equatorial_sf"/>
</dbReference>
<dbReference type="InterPro" id="IPR027410">
    <property type="entry name" value="TCP-1-like_intermed_sf"/>
</dbReference>
<dbReference type="PANTHER" id="PTHR45633">
    <property type="entry name" value="60 KDA HEAT SHOCK PROTEIN, MITOCHONDRIAL"/>
    <property type="match status" value="1"/>
</dbReference>
<dbReference type="SUPFAM" id="SSF52029">
    <property type="entry name" value="GroEL apical domain-like"/>
    <property type="match status" value="1"/>
</dbReference>
<name>TCM62_YEAST</name>
<feature type="transit peptide" description="Mitochondrion" evidence="1">
    <location>
        <begin position="1"/>
        <end position="16"/>
    </location>
</feature>
<feature type="chain" id="PRO_0000063639" description="Mitochondrial chaperone TCM62">
    <location>
        <begin position="17"/>
        <end position="572"/>
    </location>
</feature>
<feature type="topological domain" description="Mitochondrial matrix" evidence="1">
    <location>
        <begin position="17"/>
        <end position="471"/>
    </location>
</feature>
<feature type="transmembrane region" description="Helical" evidence="1">
    <location>
        <begin position="472"/>
        <end position="488"/>
    </location>
</feature>
<feature type="topological domain" description="Mitochondrial intermembrane" evidence="1">
    <location>
        <begin position="489"/>
        <end position="572"/>
    </location>
</feature>
<protein>
    <recommendedName>
        <fullName>Mitochondrial chaperone TCM62</fullName>
    </recommendedName>
</protein>
<accession>P38228</accession>
<accession>D6VQ44</accession>
<accession>Q9Y793</accession>
<proteinExistence type="evidence at protein level"/>
<organism>
    <name type="scientific">Saccharomyces cerevisiae (strain ATCC 204508 / S288c)</name>
    <name type="common">Baker's yeast</name>
    <dbReference type="NCBI Taxonomy" id="559292"/>
    <lineage>
        <taxon>Eukaryota</taxon>
        <taxon>Fungi</taxon>
        <taxon>Dikarya</taxon>
        <taxon>Ascomycota</taxon>
        <taxon>Saccharomycotina</taxon>
        <taxon>Saccharomycetes</taxon>
        <taxon>Saccharomycetales</taxon>
        <taxon>Saccharomycetaceae</taxon>
        <taxon>Saccharomyces</taxon>
    </lineage>
</organism>
<sequence length="572" mass="64252">MLRNCLRKLGNHQTKCSVKTLHTPIYRTKNLQVLRDTLSGIKLLEKIITSSSYNKTLIYEPKYKSKPQVVSSHDTMRLHNVMRELLDSLQVDEATNTRLQSNRPRKLGRVGLQLFMDCIQDNLTATSTSLTCSLLEHYFKYPEKEVTNGIKAGLRYIRDFLAKNKIIVKSQNDVDALVEQLTMSSSDSQSIKRVLKAINYELFSDDIVRVINGNKTYDEVDVSKGWKYPAGILDSNEAYLRSLELPTKKLVSIDKDMLVLMYDGTLRDANKILPTITYARKLRKSVLLIVNGDCTGDALTSVTINNNRNKRENNESRIVVLKYSKKANNDLAPQENLDFIKFLRLPCGYDSIYSPEYSPLVPSKMCADKYYGSIESIKATTGEAFLYNSIDAEAIPNKVPKSFLQNTVTLSIGGHNEIEIDRRRNAIDNCLNNVLCHGLAKGFIPGYGISLLKAIPGLNELKANEPNFMTKVGINAVLSAVILPSEVAFKNAYGYNYYEINSLIAGAINEKSFPMAKFSPNSEPVNTVKDGNLEPWSKMDSCLAGVETFIELLTSCNTIITCVYKKPERHKA</sequence>
<comment type="function">
    <text>Chaperone. Required for the assembly of succinate dehydrogenase subunits. Ensures mitochondrial gene expression at elevated temperatures and prevents heat-aggregation of the ribosomal subunit VAR1.</text>
</comment>
<comment type="subunit">
    <text>Forms a high molecular mass protein complex of approximately 850 kDa.</text>
</comment>
<comment type="subcellular location">
    <subcellularLocation>
        <location evidence="2 3">Mitochondrion inner membrane</location>
        <topology evidence="2 3">Single-pass membrane protein</topology>
        <orientation evidence="2 3">Matrix side</orientation>
    </subcellularLocation>
</comment>
<comment type="similarity">
    <text evidence="4">Belongs to the chaperonin (HSP60) family.</text>
</comment>
<comment type="sequence caution" evidence="4">
    <conflict type="frameshift">
        <sequence resource="EMBL-CDS" id="CAA84986"/>
    </conflict>
</comment>
<gene>
    <name type="primary">TCM62</name>
    <name type="ordered locus">YBR044C</name>
    <name type="ORF">YBR0414</name>
</gene>
<evidence type="ECO:0000255" key="1"/>
<evidence type="ECO:0000269" key="2">
    <source>
    </source>
</evidence>
<evidence type="ECO:0000269" key="3">
    <source>
    </source>
</evidence>
<evidence type="ECO:0000305" key="4"/>
<reference key="1">
    <citation type="journal article" date="1998" name="J. Biol. Chem.">
        <title>The Saccharomyces cerevisiae TCM62 gene encodes a chaperone necessary for the assembly of the mitochondrial succinate dehydrogenase (complex II).</title>
        <authorList>
            <person name="Dibrov E."/>
            <person name="Fu S."/>
            <person name="Lemire B.D."/>
        </authorList>
    </citation>
    <scope>NUCLEOTIDE SEQUENCE [GENOMIC DNA]</scope>
    <scope>CHARACTERIZATION</scope>
    <scope>SUBCELLULAR LOCATION</scope>
    <scope>TOPOLOGY</scope>
    <source>
        <strain>S288c / GRF88</strain>
    </source>
</reference>
<reference key="2">
    <citation type="submission" date="1999-02" db="EMBL/GenBank/DDBJ databases">
        <authorList>
            <person name="Lemire B.D."/>
        </authorList>
    </citation>
    <scope>SEQUENCE REVISION TO 566</scope>
</reference>
<reference key="3">
    <citation type="journal article" date="1994" name="EMBO J.">
        <title>Complete DNA sequence of yeast chromosome II.</title>
        <authorList>
            <person name="Feldmann H."/>
            <person name="Aigle M."/>
            <person name="Aljinovic G."/>
            <person name="Andre B."/>
            <person name="Baclet M.C."/>
            <person name="Barthe C."/>
            <person name="Baur A."/>
            <person name="Becam A.-M."/>
            <person name="Biteau N."/>
            <person name="Boles E."/>
            <person name="Brandt T."/>
            <person name="Brendel M."/>
            <person name="Brueckner M."/>
            <person name="Bussereau F."/>
            <person name="Christiansen C."/>
            <person name="Contreras R."/>
            <person name="Crouzet M."/>
            <person name="Cziepluch C."/>
            <person name="Demolis N."/>
            <person name="Delaveau T."/>
            <person name="Doignon F."/>
            <person name="Domdey H."/>
            <person name="Duesterhus S."/>
            <person name="Dubois E."/>
            <person name="Dujon B."/>
            <person name="El Bakkoury M."/>
            <person name="Entian K.-D."/>
            <person name="Feuermann M."/>
            <person name="Fiers W."/>
            <person name="Fobo G.M."/>
            <person name="Fritz C."/>
            <person name="Gassenhuber J."/>
            <person name="Glansdorff N."/>
            <person name="Goffeau A."/>
            <person name="Grivell L.A."/>
            <person name="de Haan M."/>
            <person name="Hein C."/>
            <person name="Herbert C.J."/>
            <person name="Hollenberg C.P."/>
            <person name="Holmstroem K."/>
            <person name="Jacq C."/>
            <person name="Jacquet M."/>
            <person name="Jauniaux J.-C."/>
            <person name="Jonniaux J.-L."/>
            <person name="Kallesoee T."/>
            <person name="Kiesau P."/>
            <person name="Kirchrath L."/>
            <person name="Koetter P."/>
            <person name="Korol S."/>
            <person name="Liebl S."/>
            <person name="Logghe M."/>
            <person name="Lohan A.J.E."/>
            <person name="Louis E.J."/>
            <person name="Li Z.Y."/>
            <person name="Maat M.J."/>
            <person name="Mallet L."/>
            <person name="Mannhaupt G."/>
            <person name="Messenguy F."/>
            <person name="Miosga T."/>
            <person name="Molemans F."/>
            <person name="Mueller S."/>
            <person name="Nasr F."/>
            <person name="Obermaier B."/>
            <person name="Perea J."/>
            <person name="Pierard A."/>
            <person name="Piravandi E."/>
            <person name="Pohl F.M."/>
            <person name="Pohl T.M."/>
            <person name="Potier S."/>
            <person name="Proft M."/>
            <person name="Purnelle B."/>
            <person name="Ramezani Rad M."/>
            <person name="Rieger M."/>
            <person name="Rose M."/>
            <person name="Schaaff-Gerstenschlaeger I."/>
            <person name="Scherens B."/>
            <person name="Schwarzlose C."/>
            <person name="Skala J."/>
            <person name="Slonimski P.P."/>
            <person name="Smits P.H.M."/>
            <person name="Souciet J.-L."/>
            <person name="Steensma H.Y."/>
            <person name="Stucka R."/>
            <person name="Urrestarazu L.A."/>
            <person name="van der Aart Q.J.M."/>
            <person name="Van Dyck L."/>
            <person name="Vassarotti A."/>
            <person name="Vetter I."/>
            <person name="Vierendeels F."/>
            <person name="Vissers S."/>
            <person name="Wagner G."/>
            <person name="de Wergifosse P."/>
            <person name="Wolfe K.H."/>
            <person name="Zagulski M."/>
            <person name="Zimmermann F.K."/>
            <person name="Mewes H.-W."/>
            <person name="Kleine K."/>
        </authorList>
    </citation>
    <scope>NUCLEOTIDE SEQUENCE [LARGE SCALE GENOMIC DNA]</scope>
    <source>
        <strain>ATCC 204508 / S288c</strain>
    </source>
</reference>
<reference key="4">
    <citation type="journal article" date="2014" name="G3 (Bethesda)">
        <title>The reference genome sequence of Saccharomyces cerevisiae: Then and now.</title>
        <authorList>
            <person name="Engel S.R."/>
            <person name="Dietrich F.S."/>
            <person name="Fisk D.G."/>
            <person name="Binkley G."/>
            <person name="Balakrishnan R."/>
            <person name="Costanzo M.C."/>
            <person name="Dwight S.S."/>
            <person name="Hitz B.C."/>
            <person name="Karra K."/>
            <person name="Nash R.S."/>
            <person name="Weng S."/>
            <person name="Wong E.D."/>
            <person name="Lloyd P."/>
            <person name="Skrzypek M.S."/>
            <person name="Miyasato S.R."/>
            <person name="Simison M."/>
            <person name="Cherry J.M."/>
        </authorList>
    </citation>
    <scope>GENOME REANNOTATION</scope>
    <scope>SEQUENCE REVISION TO 566</scope>
    <source>
        <strain>ATCC 204508 / S288c</strain>
    </source>
</reference>
<reference key="5">
    <citation type="journal article" date="2000" name="FEBS Lett.">
        <title>The chaperonin-related protein Tcm62p ensures mitochondrial gene expression under heat stress.</title>
        <authorList>
            <person name="Klanner C."/>
            <person name="Neupert W."/>
            <person name="Langer T."/>
        </authorList>
    </citation>
    <scope>CHARACTERIZATION</scope>
</reference>
<reference key="6">
    <citation type="journal article" date="2003" name="Proc. Natl. Acad. Sci. U.S.A.">
        <title>The proteome of Saccharomyces cerevisiae mitochondria.</title>
        <authorList>
            <person name="Sickmann A."/>
            <person name="Reinders J."/>
            <person name="Wagner Y."/>
            <person name="Joppich C."/>
            <person name="Zahedi R.P."/>
            <person name="Meyer H.E."/>
            <person name="Schoenfisch B."/>
            <person name="Perschil I."/>
            <person name="Chacinska A."/>
            <person name="Guiard B."/>
            <person name="Rehling P."/>
            <person name="Pfanner N."/>
            <person name="Meisinger C."/>
        </authorList>
    </citation>
    <scope>SUBCELLULAR LOCATION [LARGE SCALE ANALYSIS]</scope>
    <source>
        <strain>ATCC 76625 / YPH499</strain>
    </source>
</reference>